<sequence>MSATPEKADDLIVVGKIFSVHGVRGEVKVFSFTDPIENLLGYRNWTLRREGVVKQVELVSGRSTQKDLVVKLKGLDDRDEARLLSGYEICIPRSLLPDLTADEYYWYQLEGLSVINQDEQLFGKVDHLLETGANDVLVVKPCVGSLDDRERLLPYTEQCVLAIDLEAGVMRVEWDADF</sequence>
<organism>
    <name type="scientific">Pseudomonas fluorescens (strain Pf0-1)</name>
    <dbReference type="NCBI Taxonomy" id="205922"/>
    <lineage>
        <taxon>Bacteria</taxon>
        <taxon>Pseudomonadati</taxon>
        <taxon>Pseudomonadota</taxon>
        <taxon>Gammaproteobacteria</taxon>
        <taxon>Pseudomonadales</taxon>
        <taxon>Pseudomonadaceae</taxon>
        <taxon>Pseudomonas</taxon>
    </lineage>
</organism>
<dbReference type="EMBL" id="CP000094">
    <property type="protein sequence ID" value="ABA72763.1"/>
    <property type="molecule type" value="Genomic_DNA"/>
</dbReference>
<dbReference type="RefSeq" id="WP_011332613.1">
    <property type="nucleotide sequence ID" value="NC_007492.2"/>
</dbReference>
<dbReference type="SMR" id="Q3KHJ3"/>
<dbReference type="KEGG" id="pfo:Pfl01_1020"/>
<dbReference type="eggNOG" id="COG0806">
    <property type="taxonomic scope" value="Bacteria"/>
</dbReference>
<dbReference type="HOGENOM" id="CLU_077636_1_0_6"/>
<dbReference type="Proteomes" id="UP000002704">
    <property type="component" value="Chromosome"/>
</dbReference>
<dbReference type="GO" id="GO:0005737">
    <property type="term" value="C:cytoplasm"/>
    <property type="evidence" value="ECO:0007669"/>
    <property type="project" value="UniProtKB-SubCell"/>
</dbReference>
<dbReference type="GO" id="GO:0005840">
    <property type="term" value="C:ribosome"/>
    <property type="evidence" value="ECO:0007669"/>
    <property type="project" value="InterPro"/>
</dbReference>
<dbReference type="GO" id="GO:0043022">
    <property type="term" value="F:ribosome binding"/>
    <property type="evidence" value="ECO:0007669"/>
    <property type="project" value="InterPro"/>
</dbReference>
<dbReference type="GO" id="GO:0042274">
    <property type="term" value="P:ribosomal small subunit biogenesis"/>
    <property type="evidence" value="ECO:0007669"/>
    <property type="project" value="UniProtKB-UniRule"/>
</dbReference>
<dbReference type="GO" id="GO:0006364">
    <property type="term" value="P:rRNA processing"/>
    <property type="evidence" value="ECO:0007669"/>
    <property type="project" value="UniProtKB-UniRule"/>
</dbReference>
<dbReference type="Gene3D" id="2.30.30.240">
    <property type="entry name" value="PRC-barrel domain"/>
    <property type="match status" value="1"/>
</dbReference>
<dbReference type="Gene3D" id="2.40.30.60">
    <property type="entry name" value="RimM"/>
    <property type="match status" value="1"/>
</dbReference>
<dbReference type="HAMAP" id="MF_00014">
    <property type="entry name" value="Ribosome_mat_RimM"/>
    <property type="match status" value="1"/>
</dbReference>
<dbReference type="InterPro" id="IPR011033">
    <property type="entry name" value="PRC_barrel-like_sf"/>
</dbReference>
<dbReference type="InterPro" id="IPR056792">
    <property type="entry name" value="PRC_RimM"/>
</dbReference>
<dbReference type="InterPro" id="IPR011961">
    <property type="entry name" value="RimM"/>
</dbReference>
<dbReference type="InterPro" id="IPR002676">
    <property type="entry name" value="RimM_N"/>
</dbReference>
<dbReference type="InterPro" id="IPR036976">
    <property type="entry name" value="RimM_N_sf"/>
</dbReference>
<dbReference type="InterPro" id="IPR009000">
    <property type="entry name" value="Transl_B-barrel_sf"/>
</dbReference>
<dbReference type="NCBIfam" id="TIGR02273">
    <property type="entry name" value="16S_RimM"/>
    <property type="match status" value="1"/>
</dbReference>
<dbReference type="PANTHER" id="PTHR33692">
    <property type="entry name" value="RIBOSOME MATURATION FACTOR RIMM"/>
    <property type="match status" value="1"/>
</dbReference>
<dbReference type="PANTHER" id="PTHR33692:SF1">
    <property type="entry name" value="RIBOSOME MATURATION FACTOR RIMM"/>
    <property type="match status" value="1"/>
</dbReference>
<dbReference type="Pfam" id="PF24986">
    <property type="entry name" value="PRC_RimM"/>
    <property type="match status" value="1"/>
</dbReference>
<dbReference type="Pfam" id="PF01782">
    <property type="entry name" value="RimM"/>
    <property type="match status" value="1"/>
</dbReference>
<dbReference type="SUPFAM" id="SSF50346">
    <property type="entry name" value="PRC-barrel domain"/>
    <property type="match status" value="1"/>
</dbReference>
<dbReference type="SUPFAM" id="SSF50447">
    <property type="entry name" value="Translation proteins"/>
    <property type="match status" value="1"/>
</dbReference>
<comment type="function">
    <text evidence="1">An accessory protein needed during the final step in the assembly of 30S ribosomal subunit, possibly for assembly of the head region. Essential for efficient processing of 16S rRNA. May be needed both before and after RbfA during the maturation of 16S rRNA. It has affinity for free ribosomal 30S subunits but not for 70S ribosomes.</text>
</comment>
<comment type="subunit">
    <text evidence="1">Binds ribosomal protein uS19.</text>
</comment>
<comment type="subcellular location">
    <subcellularLocation>
        <location evidence="1">Cytoplasm</location>
    </subcellularLocation>
</comment>
<comment type="domain">
    <text evidence="1">The PRC barrel domain binds ribosomal protein uS19.</text>
</comment>
<comment type="similarity">
    <text evidence="1">Belongs to the RimM family.</text>
</comment>
<accession>Q3KHJ3</accession>
<evidence type="ECO:0000255" key="1">
    <source>
        <dbReference type="HAMAP-Rule" id="MF_00014"/>
    </source>
</evidence>
<name>RIMM_PSEPF</name>
<gene>
    <name evidence="1" type="primary">rimM</name>
    <name type="ordered locus">Pfl01_1020</name>
</gene>
<protein>
    <recommendedName>
        <fullName evidence="1">Ribosome maturation factor RimM</fullName>
    </recommendedName>
</protein>
<reference key="1">
    <citation type="journal article" date="2009" name="Genome Biol.">
        <title>Genomic and genetic analyses of diversity and plant interactions of Pseudomonas fluorescens.</title>
        <authorList>
            <person name="Silby M.W."/>
            <person name="Cerdeno-Tarraga A.M."/>
            <person name="Vernikos G.S."/>
            <person name="Giddens S.R."/>
            <person name="Jackson R.W."/>
            <person name="Preston G.M."/>
            <person name="Zhang X.-X."/>
            <person name="Moon C.D."/>
            <person name="Gehrig S.M."/>
            <person name="Godfrey S.A.C."/>
            <person name="Knight C.G."/>
            <person name="Malone J.G."/>
            <person name="Robinson Z."/>
            <person name="Spiers A.J."/>
            <person name="Harris S."/>
            <person name="Challis G.L."/>
            <person name="Yaxley A.M."/>
            <person name="Harris D."/>
            <person name="Seeger K."/>
            <person name="Murphy L."/>
            <person name="Rutter S."/>
            <person name="Squares R."/>
            <person name="Quail M.A."/>
            <person name="Saunders E."/>
            <person name="Mavromatis K."/>
            <person name="Brettin T.S."/>
            <person name="Bentley S.D."/>
            <person name="Hothersall J."/>
            <person name="Stephens E."/>
            <person name="Thomas C.M."/>
            <person name="Parkhill J."/>
            <person name="Levy S.B."/>
            <person name="Rainey P.B."/>
            <person name="Thomson N.R."/>
        </authorList>
    </citation>
    <scope>NUCLEOTIDE SEQUENCE [LARGE SCALE GENOMIC DNA]</scope>
    <source>
        <strain>Pf0-1</strain>
    </source>
</reference>
<keyword id="KW-0143">Chaperone</keyword>
<keyword id="KW-0963">Cytoplasm</keyword>
<keyword id="KW-0690">Ribosome biogenesis</keyword>
<keyword id="KW-0698">rRNA processing</keyword>
<proteinExistence type="inferred from homology"/>
<feature type="chain" id="PRO_0000244149" description="Ribosome maturation factor RimM">
    <location>
        <begin position="1"/>
        <end position="178"/>
    </location>
</feature>
<feature type="domain" description="PRC barrel" evidence="1">
    <location>
        <begin position="101"/>
        <end position="178"/>
    </location>
</feature>